<proteinExistence type="inferred from homology"/>
<feature type="chain" id="PRO_0000317668" description="Allantoinase">
    <location>
        <begin position="1"/>
        <end position="454"/>
    </location>
</feature>
<feature type="binding site" evidence="1">
    <location>
        <position position="60"/>
    </location>
    <ligand>
        <name>Zn(2+)</name>
        <dbReference type="ChEBI" id="CHEBI:29105"/>
        <label>1</label>
    </ligand>
</feature>
<feature type="binding site" evidence="1">
    <location>
        <position position="62"/>
    </location>
    <ligand>
        <name>Zn(2+)</name>
        <dbReference type="ChEBI" id="CHEBI:29105"/>
        <label>1</label>
    </ligand>
</feature>
<feature type="binding site" description="via carbamate group" evidence="1">
    <location>
        <position position="147"/>
    </location>
    <ligand>
        <name>Zn(2+)</name>
        <dbReference type="ChEBI" id="CHEBI:29105"/>
        <label>1</label>
    </ligand>
</feature>
<feature type="binding site" description="via carbamate group" evidence="1">
    <location>
        <position position="147"/>
    </location>
    <ligand>
        <name>Zn(2+)</name>
        <dbReference type="ChEBI" id="CHEBI:29105"/>
        <label>2</label>
    </ligand>
</feature>
<feature type="binding site" evidence="1">
    <location>
        <position position="183"/>
    </location>
    <ligand>
        <name>Zn(2+)</name>
        <dbReference type="ChEBI" id="CHEBI:29105"/>
        <label>2</label>
    </ligand>
</feature>
<feature type="binding site" evidence="1">
    <location>
        <position position="239"/>
    </location>
    <ligand>
        <name>Zn(2+)</name>
        <dbReference type="ChEBI" id="CHEBI:29105"/>
        <label>2</label>
    </ligand>
</feature>
<feature type="binding site" evidence="1">
    <location>
        <position position="312"/>
    </location>
    <ligand>
        <name>Zn(2+)</name>
        <dbReference type="ChEBI" id="CHEBI:29105"/>
        <label>1</label>
    </ligand>
</feature>
<feature type="modified residue" description="N6-carboxylysine" evidence="1">
    <location>
        <position position="147"/>
    </location>
</feature>
<reference key="1">
    <citation type="journal article" date="2007" name="Nat. Biotechnol.">
        <title>Comparative analysis of the complete genome sequence of the plant growth-promoting bacterium Bacillus amyloliquefaciens FZB42.</title>
        <authorList>
            <person name="Chen X.H."/>
            <person name="Koumoutsi A."/>
            <person name="Scholz R."/>
            <person name="Eisenreich A."/>
            <person name="Schneider K."/>
            <person name="Heinemeyer I."/>
            <person name="Morgenstern B."/>
            <person name="Voss B."/>
            <person name="Hess W.R."/>
            <person name="Reva O."/>
            <person name="Junge H."/>
            <person name="Voigt B."/>
            <person name="Jungblut P.R."/>
            <person name="Vater J."/>
            <person name="Suessmuth R."/>
            <person name="Liesegang H."/>
            <person name="Strittmatter A."/>
            <person name="Gottschalk G."/>
            <person name="Borriss R."/>
        </authorList>
    </citation>
    <scope>NUCLEOTIDE SEQUENCE [LARGE SCALE GENOMIC DNA]</scope>
    <source>
        <strain>DSM 23117 / BGSC 10A6 / LMG 26770 / FZB42</strain>
    </source>
</reference>
<keyword id="KW-0378">Hydrolase</keyword>
<keyword id="KW-0479">Metal-binding</keyword>
<keyword id="KW-0659">Purine metabolism</keyword>
<keyword id="KW-0862">Zinc</keyword>
<evidence type="ECO:0000255" key="1">
    <source>
        <dbReference type="HAMAP-Rule" id="MF_01645"/>
    </source>
</evidence>
<accession>A7Z8F5</accession>
<comment type="function">
    <text evidence="1">Catalyzes the conversion of allantoin (5-ureidohydantoin) to allantoic acid by hydrolytic cleavage of the five-member hydantoin ring.</text>
</comment>
<comment type="catalytic activity">
    <reaction evidence="1">
        <text>(S)-allantoin + H2O = allantoate + H(+)</text>
        <dbReference type="Rhea" id="RHEA:17029"/>
        <dbReference type="ChEBI" id="CHEBI:15377"/>
        <dbReference type="ChEBI" id="CHEBI:15378"/>
        <dbReference type="ChEBI" id="CHEBI:15678"/>
        <dbReference type="ChEBI" id="CHEBI:17536"/>
        <dbReference type="EC" id="3.5.2.5"/>
    </reaction>
</comment>
<comment type="cofactor">
    <cofactor evidence="1">
        <name>Zn(2+)</name>
        <dbReference type="ChEBI" id="CHEBI:29105"/>
    </cofactor>
    <text evidence="1">Binds 2 Zn(2+) ions per subunit.</text>
</comment>
<comment type="pathway">
    <text evidence="1">Nitrogen metabolism; (S)-allantoin degradation; allantoate from (S)-allantoin: step 1/1.</text>
</comment>
<comment type="subunit">
    <text evidence="1">Homotetramer.</text>
</comment>
<comment type="PTM">
    <text evidence="1">Carboxylation allows a single lysine to coordinate two zinc ions.</text>
</comment>
<comment type="similarity">
    <text evidence="1">Belongs to the metallo-dependent hydrolases superfamily. Allantoinase family.</text>
</comment>
<sequence>MAYDVIVKGAKAVRKGGTERADIAVKDGKIALIGPGIDENAEQVVQADGMYVFPGAVDCHVHFNEPGREEWEGIETGSNMLAAGGCTSYFDMPLNCIPSTVTAENLLAKAEIAERKSAVDFALWGGLMPGYTEHIRPMAEAGAIGFKAFLSKSGTDEFQSADERTLLKGMKEIAACGKVLALHAESDALTRFLEAEYALQGKIDVRAYASSRPEEAECEAVQRAIEYARATGCALHFVHISTKRAVLSIQQAKKDGLDVTVETCPHYLLFSFEDFLKKGAAAKCAPPLRSEADKEELIGVLAEGLIDMVSSDHSPCHPSLKREDNMFLSWGGISGGQFTLLGMIQLAIDHGIPFEHVARWTAEAPAKRFGLTNKGRLEEGFDADFAIVRPEPFTVTKETMFSKHKQSLYEGHTFPYRIAATYSKGRCVYQDGGRKQSGAFGTFLKPSEIKEPIL</sequence>
<protein>
    <recommendedName>
        <fullName evidence="1">Allantoinase</fullName>
        <ecNumber evidence="1">3.5.2.5</ecNumber>
    </recommendedName>
    <alternativeName>
        <fullName evidence="1">Allantoin-utilizing enzyme</fullName>
    </alternativeName>
</protein>
<dbReference type="EC" id="3.5.2.5" evidence="1"/>
<dbReference type="EMBL" id="CP000560">
    <property type="protein sequence ID" value="ABS75281.1"/>
    <property type="molecule type" value="Genomic_DNA"/>
</dbReference>
<dbReference type="RefSeq" id="WP_012118360.1">
    <property type="nucleotide sequence ID" value="NC_009725.2"/>
</dbReference>
<dbReference type="SMR" id="A7Z8F5"/>
<dbReference type="GeneID" id="93082094"/>
<dbReference type="KEGG" id="bay:RBAM_029500"/>
<dbReference type="HOGENOM" id="CLU_015572_4_0_9"/>
<dbReference type="UniPathway" id="UPA00395">
    <property type="reaction ID" value="UER00653"/>
</dbReference>
<dbReference type="Proteomes" id="UP000001120">
    <property type="component" value="Chromosome"/>
</dbReference>
<dbReference type="GO" id="GO:0005737">
    <property type="term" value="C:cytoplasm"/>
    <property type="evidence" value="ECO:0007669"/>
    <property type="project" value="TreeGrafter"/>
</dbReference>
<dbReference type="GO" id="GO:0004038">
    <property type="term" value="F:allantoinase activity"/>
    <property type="evidence" value="ECO:0007669"/>
    <property type="project" value="UniProtKB-UniRule"/>
</dbReference>
<dbReference type="GO" id="GO:0050897">
    <property type="term" value="F:cobalt ion binding"/>
    <property type="evidence" value="ECO:0007669"/>
    <property type="project" value="InterPro"/>
</dbReference>
<dbReference type="GO" id="GO:0008270">
    <property type="term" value="F:zinc ion binding"/>
    <property type="evidence" value="ECO:0007669"/>
    <property type="project" value="InterPro"/>
</dbReference>
<dbReference type="GO" id="GO:0000256">
    <property type="term" value="P:allantoin catabolic process"/>
    <property type="evidence" value="ECO:0007669"/>
    <property type="project" value="UniProtKB-UniRule"/>
</dbReference>
<dbReference type="GO" id="GO:0006145">
    <property type="term" value="P:purine nucleobase catabolic process"/>
    <property type="evidence" value="ECO:0007669"/>
    <property type="project" value="TreeGrafter"/>
</dbReference>
<dbReference type="Gene3D" id="3.20.20.140">
    <property type="entry name" value="Metal-dependent hydrolases"/>
    <property type="match status" value="1"/>
</dbReference>
<dbReference type="Gene3D" id="2.30.40.10">
    <property type="entry name" value="Urease, subunit C, domain 1"/>
    <property type="match status" value="1"/>
</dbReference>
<dbReference type="HAMAP" id="MF_01645">
    <property type="entry name" value="Hydantoinase"/>
    <property type="match status" value="1"/>
</dbReference>
<dbReference type="InterPro" id="IPR017593">
    <property type="entry name" value="Allantoinase"/>
</dbReference>
<dbReference type="InterPro" id="IPR047604">
    <property type="entry name" value="Allantoinase_bact"/>
</dbReference>
<dbReference type="InterPro" id="IPR006680">
    <property type="entry name" value="Amidohydro-rel"/>
</dbReference>
<dbReference type="InterPro" id="IPR050138">
    <property type="entry name" value="DHOase/Allantoinase_Hydrolase"/>
</dbReference>
<dbReference type="InterPro" id="IPR011059">
    <property type="entry name" value="Metal-dep_hydrolase_composite"/>
</dbReference>
<dbReference type="InterPro" id="IPR032466">
    <property type="entry name" value="Metal_Hydrolase"/>
</dbReference>
<dbReference type="NCBIfam" id="TIGR03178">
    <property type="entry name" value="allantoinase"/>
    <property type="match status" value="1"/>
</dbReference>
<dbReference type="NCBIfam" id="NF004839">
    <property type="entry name" value="PRK06189.1"/>
    <property type="match status" value="1"/>
</dbReference>
<dbReference type="PANTHER" id="PTHR43668">
    <property type="entry name" value="ALLANTOINASE"/>
    <property type="match status" value="1"/>
</dbReference>
<dbReference type="PANTHER" id="PTHR43668:SF4">
    <property type="entry name" value="ALLANTOINASE"/>
    <property type="match status" value="1"/>
</dbReference>
<dbReference type="Pfam" id="PF01979">
    <property type="entry name" value="Amidohydro_1"/>
    <property type="match status" value="1"/>
</dbReference>
<dbReference type="SUPFAM" id="SSF51338">
    <property type="entry name" value="Composite domain of metallo-dependent hydrolases"/>
    <property type="match status" value="1"/>
</dbReference>
<dbReference type="SUPFAM" id="SSF51556">
    <property type="entry name" value="Metallo-dependent hydrolases"/>
    <property type="match status" value="1"/>
</dbReference>
<name>ALLB_BACVZ</name>
<organism>
    <name type="scientific">Bacillus velezensis (strain DSM 23117 / BGSC 10A6 / LMG 26770 / FZB42)</name>
    <name type="common">Bacillus amyloliquefaciens subsp. plantarum</name>
    <dbReference type="NCBI Taxonomy" id="326423"/>
    <lineage>
        <taxon>Bacteria</taxon>
        <taxon>Bacillati</taxon>
        <taxon>Bacillota</taxon>
        <taxon>Bacilli</taxon>
        <taxon>Bacillales</taxon>
        <taxon>Bacillaceae</taxon>
        <taxon>Bacillus</taxon>
        <taxon>Bacillus amyloliquefaciens group</taxon>
    </lineage>
</organism>
<gene>
    <name evidence="1" type="primary">allB</name>
    <name evidence="1" type="synonym">pucH</name>
    <name type="ordered locus">RBAM_029500</name>
</gene>